<organism>
    <name type="scientific">Schizosaccharomyces pombe (strain 972 / ATCC 24843)</name>
    <name type="common">Fission yeast</name>
    <dbReference type="NCBI Taxonomy" id="284812"/>
    <lineage>
        <taxon>Eukaryota</taxon>
        <taxon>Fungi</taxon>
        <taxon>Dikarya</taxon>
        <taxon>Ascomycota</taxon>
        <taxon>Taphrinomycotina</taxon>
        <taxon>Schizosaccharomycetes</taxon>
        <taxon>Schizosaccharomycetales</taxon>
        <taxon>Schizosaccharomycetaceae</taxon>
        <taxon>Schizosaccharomyces</taxon>
    </lineage>
</organism>
<reference key="1">
    <citation type="journal article" date="2002" name="Nature">
        <title>The genome sequence of Schizosaccharomyces pombe.</title>
        <authorList>
            <person name="Wood V."/>
            <person name="Gwilliam R."/>
            <person name="Rajandream M.A."/>
            <person name="Lyne M.H."/>
            <person name="Lyne R."/>
            <person name="Stewart A."/>
            <person name="Sgouros J.G."/>
            <person name="Peat N."/>
            <person name="Hayles J."/>
            <person name="Baker S.G."/>
            <person name="Basham D."/>
            <person name="Bowman S."/>
            <person name="Brooks K."/>
            <person name="Brown D."/>
            <person name="Brown S."/>
            <person name="Chillingworth T."/>
            <person name="Churcher C.M."/>
            <person name="Collins M."/>
            <person name="Connor R."/>
            <person name="Cronin A."/>
            <person name="Davis P."/>
            <person name="Feltwell T."/>
            <person name="Fraser A."/>
            <person name="Gentles S."/>
            <person name="Goble A."/>
            <person name="Hamlin N."/>
            <person name="Harris D.E."/>
            <person name="Hidalgo J."/>
            <person name="Hodgson G."/>
            <person name="Holroyd S."/>
            <person name="Hornsby T."/>
            <person name="Howarth S."/>
            <person name="Huckle E.J."/>
            <person name="Hunt S."/>
            <person name="Jagels K."/>
            <person name="James K.D."/>
            <person name="Jones L."/>
            <person name="Jones M."/>
            <person name="Leather S."/>
            <person name="McDonald S."/>
            <person name="McLean J."/>
            <person name="Mooney P."/>
            <person name="Moule S."/>
            <person name="Mungall K.L."/>
            <person name="Murphy L.D."/>
            <person name="Niblett D."/>
            <person name="Odell C."/>
            <person name="Oliver K."/>
            <person name="O'Neil S."/>
            <person name="Pearson D."/>
            <person name="Quail M.A."/>
            <person name="Rabbinowitsch E."/>
            <person name="Rutherford K.M."/>
            <person name="Rutter S."/>
            <person name="Saunders D."/>
            <person name="Seeger K."/>
            <person name="Sharp S."/>
            <person name="Skelton J."/>
            <person name="Simmonds M.N."/>
            <person name="Squares R."/>
            <person name="Squares S."/>
            <person name="Stevens K."/>
            <person name="Taylor K."/>
            <person name="Taylor R.G."/>
            <person name="Tivey A."/>
            <person name="Walsh S.V."/>
            <person name="Warren T."/>
            <person name="Whitehead S."/>
            <person name="Woodward J.R."/>
            <person name="Volckaert G."/>
            <person name="Aert R."/>
            <person name="Robben J."/>
            <person name="Grymonprez B."/>
            <person name="Weltjens I."/>
            <person name="Vanstreels E."/>
            <person name="Rieger M."/>
            <person name="Schaefer M."/>
            <person name="Mueller-Auer S."/>
            <person name="Gabel C."/>
            <person name="Fuchs M."/>
            <person name="Duesterhoeft A."/>
            <person name="Fritzc C."/>
            <person name="Holzer E."/>
            <person name="Moestl D."/>
            <person name="Hilbert H."/>
            <person name="Borzym K."/>
            <person name="Langer I."/>
            <person name="Beck A."/>
            <person name="Lehrach H."/>
            <person name="Reinhardt R."/>
            <person name="Pohl T.M."/>
            <person name="Eger P."/>
            <person name="Zimmermann W."/>
            <person name="Wedler H."/>
            <person name="Wambutt R."/>
            <person name="Purnelle B."/>
            <person name="Goffeau A."/>
            <person name="Cadieu E."/>
            <person name="Dreano S."/>
            <person name="Gloux S."/>
            <person name="Lelaure V."/>
            <person name="Mottier S."/>
            <person name="Galibert F."/>
            <person name="Aves S.J."/>
            <person name="Xiang Z."/>
            <person name="Hunt C."/>
            <person name="Moore K."/>
            <person name="Hurst S.M."/>
            <person name="Lucas M."/>
            <person name="Rochet M."/>
            <person name="Gaillardin C."/>
            <person name="Tallada V.A."/>
            <person name="Garzon A."/>
            <person name="Thode G."/>
            <person name="Daga R.R."/>
            <person name="Cruzado L."/>
            <person name="Jimenez J."/>
            <person name="Sanchez M."/>
            <person name="del Rey F."/>
            <person name="Benito J."/>
            <person name="Dominguez A."/>
            <person name="Revuelta J.L."/>
            <person name="Moreno S."/>
            <person name="Armstrong J."/>
            <person name="Forsburg S.L."/>
            <person name="Cerutti L."/>
            <person name="Lowe T."/>
            <person name="McCombie W.R."/>
            <person name="Paulsen I."/>
            <person name="Potashkin J."/>
            <person name="Shpakovski G.V."/>
            <person name="Ussery D."/>
            <person name="Barrell B.G."/>
            <person name="Nurse P."/>
        </authorList>
    </citation>
    <scope>NUCLEOTIDE SEQUENCE [LARGE SCALE GENOMIC DNA]</scope>
    <source>
        <strain>972 / ATCC 24843</strain>
    </source>
</reference>
<reference key="2">
    <citation type="journal article" date="2011" name="Science">
        <title>Comparative functional genomics of the fission yeasts.</title>
        <authorList>
            <person name="Rhind N."/>
            <person name="Chen Z."/>
            <person name="Yassour M."/>
            <person name="Thompson D.A."/>
            <person name="Haas B.J."/>
            <person name="Habib N."/>
            <person name="Wapinski I."/>
            <person name="Roy S."/>
            <person name="Lin M.F."/>
            <person name="Heiman D.I."/>
            <person name="Young S.K."/>
            <person name="Furuya K."/>
            <person name="Guo Y."/>
            <person name="Pidoux A."/>
            <person name="Chen H.M."/>
            <person name="Robbertse B."/>
            <person name="Goldberg J.M."/>
            <person name="Aoki K."/>
            <person name="Bayne E.H."/>
            <person name="Berlin A.M."/>
            <person name="Desjardins C.A."/>
            <person name="Dobbs E."/>
            <person name="Dukaj L."/>
            <person name="Fan L."/>
            <person name="FitzGerald M.G."/>
            <person name="French C."/>
            <person name="Gujja S."/>
            <person name="Hansen K."/>
            <person name="Keifenheim D."/>
            <person name="Levin J.Z."/>
            <person name="Mosher R.A."/>
            <person name="Mueller C.A."/>
            <person name="Pfiffner J."/>
            <person name="Priest M."/>
            <person name="Russ C."/>
            <person name="Smialowska A."/>
            <person name="Swoboda P."/>
            <person name="Sykes S.M."/>
            <person name="Vaughn M."/>
            <person name="Vengrova S."/>
            <person name="Yoder R."/>
            <person name="Zeng Q."/>
            <person name="Allshire R."/>
            <person name="Baulcombe D."/>
            <person name="Birren B.W."/>
            <person name="Brown W."/>
            <person name="Ekwall K."/>
            <person name="Kellis M."/>
            <person name="Leatherwood J."/>
            <person name="Levin H."/>
            <person name="Margalit H."/>
            <person name="Martienssen R."/>
            <person name="Nieduszynski C.A."/>
            <person name="Spatafora J.W."/>
            <person name="Friedman N."/>
            <person name="Dalgaard J.Z."/>
            <person name="Baumann P."/>
            <person name="Niki H."/>
            <person name="Regev A."/>
            <person name="Nusbaum C."/>
        </authorList>
    </citation>
    <scope>REVISION OF GENE MODEL</scope>
</reference>
<reference key="3">
    <citation type="journal article" date="2006" name="Nat. Biotechnol.">
        <title>ORFeome cloning and global analysis of protein localization in the fission yeast Schizosaccharomyces pombe.</title>
        <authorList>
            <person name="Matsuyama A."/>
            <person name="Arai R."/>
            <person name="Yashiroda Y."/>
            <person name="Shirai A."/>
            <person name="Kamata A."/>
            <person name="Sekido S."/>
            <person name="Kobayashi Y."/>
            <person name="Hashimoto A."/>
            <person name="Hamamoto M."/>
            <person name="Hiraoka Y."/>
            <person name="Horinouchi S."/>
            <person name="Yoshida M."/>
        </authorList>
    </citation>
    <scope>SUBCELLULAR LOCATION [LARGE SCALE ANALYSIS]</scope>
</reference>
<name>YCPF_SCHPO</name>
<accession>O74521</accession>
<feature type="chain" id="PRO_0000372340" description="Uncharacterized protein C663.15c">
    <location>
        <begin position="1"/>
        <end position="678"/>
    </location>
</feature>
<feature type="region of interest" description="Disordered" evidence="1">
    <location>
        <begin position="123"/>
        <end position="156"/>
    </location>
</feature>
<feature type="region of interest" description="Disordered" evidence="1">
    <location>
        <begin position="381"/>
        <end position="417"/>
    </location>
</feature>
<keyword id="KW-0963">Cytoplasm</keyword>
<keyword id="KW-1185">Reference proteome</keyword>
<comment type="subcellular location">
    <subcellularLocation>
        <location evidence="2">Cytoplasm</location>
    </subcellularLocation>
</comment>
<protein>
    <recommendedName>
        <fullName>Uncharacterized protein C663.15c</fullName>
    </recommendedName>
</protein>
<dbReference type="EMBL" id="CU329672">
    <property type="protein sequence ID" value="CAA20375.2"/>
    <property type="molecule type" value="Genomic_DNA"/>
</dbReference>
<dbReference type="PIR" id="T41546">
    <property type="entry name" value="T41546"/>
</dbReference>
<dbReference type="RefSeq" id="NP_588276.2">
    <property type="nucleotide sequence ID" value="NM_001023266.2"/>
</dbReference>
<dbReference type="SMR" id="O74521"/>
<dbReference type="BioGRID" id="275992">
    <property type="interactions" value="33"/>
</dbReference>
<dbReference type="STRING" id="284812.O74521"/>
<dbReference type="iPTMnet" id="O74521"/>
<dbReference type="PaxDb" id="4896-SPCC663.15c.1"/>
<dbReference type="EnsemblFungi" id="SPCC663.15c.1">
    <property type="protein sequence ID" value="SPCC663.15c.1:pep"/>
    <property type="gene ID" value="SPCC663.15c"/>
</dbReference>
<dbReference type="KEGG" id="spo:2539427"/>
<dbReference type="PomBase" id="SPCC663.15c"/>
<dbReference type="VEuPathDB" id="FungiDB:SPCC663.15c"/>
<dbReference type="eggNOG" id="ENOG502R4GW">
    <property type="taxonomic scope" value="Eukaryota"/>
</dbReference>
<dbReference type="HOGENOM" id="CLU_424618_0_0_1"/>
<dbReference type="InParanoid" id="O74521"/>
<dbReference type="OMA" id="MINGMMR"/>
<dbReference type="PRO" id="PR:O74521"/>
<dbReference type="Proteomes" id="UP000002485">
    <property type="component" value="Chromosome III"/>
</dbReference>
<dbReference type="GO" id="GO:0005737">
    <property type="term" value="C:cytoplasm"/>
    <property type="evidence" value="ECO:0007005"/>
    <property type="project" value="PomBase"/>
</dbReference>
<dbReference type="GO" id="GO:0005829">
    <property type="term" value="C:cytosol"/>
    <property type="evidence" value="ECO:0007005"/>
    <property type="project" value="PomBase"/>
</dbReference>
<dbReference type="GO" id="GO:0035091">
    <property type="term" value="F:phosphatidylinositol binding"/>
    <property type="evidence" value="ECO:0000318"/>
    <property type="project" value="GO_Central"/>
</dbReference>
<dbReference type="InterPro" id="IPR047168">
    <property type="entry name" value="LEC1-like"/>
</dbReference>
<dbReference type="InterPro" id="IPR024554">
    <property type="entry name" value="LEC1-like_C"/>
</dbReference>
<dbReference type="InterPro" id="IPR024555">
    <property type="entry name" value="PX-associated"/>
</dbReference>
<dbReference type="PANTHER" id="PTHR47185:SF2">
    <property type="entry name" value="FUNGAL PROTEIN"/>
    <property type="match status" value="1"/>
</dbReference>
<dbReference type="PANTHER" id="PTHR47185">
    <property type="entry name" value="PX DOMAIN-CONTAINING PROTEIN YPR097W"/>
    <property type="match status" value="1"/>
</dbReference>
<dbReference type="Pfam" id="PF12825">
    <property type="entry name" value="DUF3818"/>
    <property type="match status" value="1"/>
</dbReference>
<dbReference type="Pfam" id="PF12828">
    <property type="entry name" value="PXB"/>
    <property type="match status" value="1"/>
</dbReference>
<sequence>MDSLTSILLLLELQHEFSGLKVPGRLAKFGPPFRPSEEFADAEDSPVMKMIAQSYIFTPTLPGVNKAPPEFWSDKLQPLLETIGKHNLSDSYDHGRVSKRKMVGFAVVVVLHVLSKGLLGKATPLSEDRKPTSNNEEEDDADEAKSSNADSSTDSVQKSLANVNMDDANGPERLHYPSVKRLREAYSLLVYGDGLQQALDRISVSEDVDSWDEPLRSVIENIRYTIAVILHFSFVTVDAIPESPHLVSNRKGPEGVVERLYNRIPWFLTRQVLRVGNAGLLMSGLTRLFLMKPLSWFGESRNLLQTMLAGIFNADLEHSESTMVETDAEFEDDAKWETMRKALQWFTQLSRTEQDDVRSQSINKELNITIAILEAYEAQQTETTETEGVDKEDSDKASSVQGNEDEVPDTASETEHSEIEDFHFDPYSEKGVHIAMRYFDAALTHRDRECLIHDLCDNDQLNDVVREFMNAFYNIIYEAHQAADFSQAIYDFQYFLWDVIQLSKAGAPLVKFINLVERYQSCFVRFIHRLVVNAPDLCGEWCDWYRHCLKQFSVEVKTPDAVDVAHKALNTLDEETKHQVLEEIGDYVKELDEESKKAIENKDSTSEWLLHLYNFFGSAIITPTTAHGVPQPQLPNCGMKLNRTKEKLLTPFRNLLMEQLNELQAKNQETPSEMTSTE</sequence>
<gene>
    <name type="ORF">SPCC663.15c</name>
</gene>
<evidence type="ECO:0000256" key="1">
    <source>
        <dbReference type="SAM" id="MobiDB-lite"/>
    </source>
</evidence>
<evidence type="ECO:0000269" key="2">
    <source>
    </source>
</evidence>
<proteinExistence type="predicted"/>